<keyword id="KW-0002">3D-structure</keyword>
<keyword id="KW-0963">Cytoplasm</keyword>
<keyword id="KW-0324">Glycolysis</keyword>
<keyword id="KW-0520">NAD</keyword>
<keyword id="KW-0547">Nucleotide-binding</keyword>
<keyword id="KW-0560">Oxidoreductase</keyword>
<name>G3P1_STAAR</name>
<comment type="function">
    <text evidence="2">Catalyzes the oxidative phosphorylation of glyceraldehyde 3-phosphate (G3P) to 1,3-bisphosphoglycerate (BPG) using the cofactor NAD. The first reaction step involves the formation of a hemiacetal intermediate between G3P and a cysteine residue, and this hemiacetal intermediate is then oxidized to a thioester, with concomitant reduction of NAD to NADH. The reduced NADH is then exchanged with the second NAD, and the thioester is attacked by a nucleophilic inorganic phosphate to produce BPG.</text>
</comment>
<comment type="catalytic activity">
    <reaction evidence="2">
        <text>D-glyceraldehyde 3-phosphate + phosphate + NAD(+) = (2R)-3-phospho-glyceroyl phosphate + NADH + H(+)</text>
        <dbReference type="Rhea" id="RHEA:10300"/>
        <dbReference type="ChEBI" id="CHEBI:15378"/>
        <dbReference type="ChEBI" id="CHEBI:43474"/>
        <dbReference type="ChEBI" id="CHEBI:57540"/>
        <dbReference type="ChEBI" id="CHEBI:57604"/>
        <dbReference type="ChEBI" id="CHEBI:57945"/>
        <dbReference type="ChEBI" id="CHEBI:59776"/>
        <dbReference type="EC" id="1.2.1.12"/>
    </reaction>
</comment>
<comment type="biophysicochemical properties">
    <kinetics>
        <KM evidence="2">0.31 mM for G3P</KM>
        <KM evidence="2">316 mM for NAD</KM>
        <text evidence="2">kcat is 70 sec(-1) for dehydrogenase activity.</text>
    </kinetics>
    <phDependence>
        <text evidence="2">Optimum pH is 8.7.</text>
    </phDependence>
    <temperatureDependence>
        <text evidence="2">Optimum temperature is 25 degrees Celsius.</text>
    </temperatureDependence>
</comment>
<comment type="pathway">
    <text evidence="6">Carbohydrate degradation; glycolysis; pyruvate from D-glyceraldehyde 3-phosphate: step 1/5.</text>
</comment>
<comment type="subunit">
    <text evidence="2 3">Homotetramer.</text>
</comment>
<comment type="subcellular location">
    <subcellularLocation>
        <location evidence="5">Cytoplasm</location>
    </subcellularLocation>
</comment>
<comment type="similarity">
    <text evidence="5">Belongs to the glyceraldehyde-3-phosphate dehydrogenase family.</text>
</comment>
<feature type="chain" id="PRO_0000145685" description="Glyceraldehyde-3-phosphate dehydrogenase 1">
    <location>
        <begin position="1"/>
        <end position="336"/>
    </location>
</feature>
<feature type="active site" description="Nucleophile" evidence="2">
    <location>
        <position position="151"/>
    </location>
</feature>
<feature type="binding site" evidence="2 3">
    <location>
        <begin position="12"/>
        <end position="13"/>
    </location>
    <ligand>
        <name>NAD(+)</name>
        <dbReference type="ChEBI" id="CHEBI:57540"/>
    </ligand>
</feature>
<feature type="binding site" evidence="2 3">
    <location>
        <position position="34"/>
    </location>
    <ligand>
        <name>NAD(+)</name>
        <dbReference type="ChEBI" id="CHEBI:57540"/>
    </ligand>
</feature>
<feature type="binding site" evidence="2 3">
    <location>
        <position position="120"/>
    </location>
    <ligand>
        <name>NAD(+)</name>
        <dbReference type="ChEBI" id="CHEBI:57540"/>
    </ligand>
</feature>
<feature type="binding site" evidence="2">
    <location>
        <begin position="150"/>
        <end position="152"/>
    </location>
    <ligand>
        <name>D-glyceraldehyde 3-phosphate</name>
        <dbReference type="ChEBI" id="CHEBI:59776"/>
    </ligand>
</feature>
<feature type="binding site" evidence="2">
    <location>
        <position position="181"/>
    </location>
    <ligand>
        <name>D-glyceraldehyde 3-phosphate</name>
        <dbReference type="ChEBI" id="CHEBI:59776"/>
    </ligand>
</feature>
<feature type="binding site" evidence="1">
    <location>
        <position position="198"/>
    </location>
    <ligand>
        <name>D-glyceraldehyde 3-phosphate</name>
        <dbReference type="ChEBI" id="CHEBI:59776"/>
    </ligand>
</feature>
<feature type="binding site" evidence="2">
    <location>
        <begin position="211"/>
        <end position="212"/>
    </location>
    <ligand>
        <name>D-glyceraldehyde 3-phosphate</name>
        <dbReference type="ChEBI" id="CHEBI:59776"/>
    </ligand>
</feature>
<feature type="binding site" evidence="2">
    <location>
        <position position="234"/>
    </location>
    <ligand>
        <name>D-glyceraldehyde 3-phosphate</name>
        <dbReference type="ChEBI" id="CHEBI:59776"/>
    </ligand>
</feature>
<feature type="binding site" evidence="2">
    <location>
        <position position="316"/>
    </location>
    <ligand>
        <name>NAD(+)</name>
        <dbReference type="ChEBI" id="CHEBI:57540"/>
    </ligand>
</feature>
<feature type="site" description="Activates thiol group during catalysis" evidence="2">
    <location>
        <position position="178"/>
    </location>
</feature>
<feature type="mutagenesis site" description="Loss of dehydrogenase activity." evidence="2">
    <original>C</original>
    <variation>S</variation>
    <location>
        <position position="151"/>
    </location>
</feature>
<feature type="mutagenesis site" description="Loss of dehydrogenase activity." evidence="2">
    <original>H</original>
    <variation>N</variation>
    <location>
        <position position="178"/>
    </location>
</feature>
<feature type="strand" evidence="7">
    <location>
        <begin position="3"/>
        <end position="8"/>
    </location>
</feature>
<feature type="helix" evidence="7">
    <location>
        <begin position="12"/>
        <end position="22"/>
    </location>
</feature>
<feature type="strand" evidence="7">
    <location>
        <begin position="27"/>
        <end position="33"/>
    </location>
</feature>
<feature type="helix" evidence="7">
    <location>
        <begin position="38"/>
        <end position="46"/>
    </location>
</feature>
<feature type="turn" evidence="7">
    <location>
        <begin position="49"/>
        <end position="51"/>
    </location>
</feature>
<feature type="strand" evidence="7">
    <location>
        <begin position="58"/>
        <end position="61"/>
    </location>
</feature>
<feature type="strand" evidence="7">
    <location>
        <begin position="64"/>
        <end position="67"/>
    </location>
</feature>
<feature type="strand" evidence="7">
    <location>
        <begin position="70"/>
        <end position="75"/>
    </location>
</feature>
<feature type="helix" evidence="7">
    <location>
        <begin position="80"/>
        <end position="82"/>
    </location>
</feature>
<feature type="turn" evidence="7">
    <location>
        <begin position="85"/>
        <end position="89"/>
    </location>
</feature>
<feature type="strand" evidence="7">
    <location>
        <begin position="91"/>
        <end position="95"/>
    </location>
</feature>
<feature type="strand" evidence="7">
    <location>
        <begin position="97"/>
        <end position="99"/>
    </location>
</feature>
<feature type="helix" evidence="7">
    <location>
        <begin position="103"/>
        <end position="111"/>
    </location>
</feature>
<feature type="strand" evidence="7">
    <location>
        <begin position="115"/>
        <end position="121"/>
    </location>
</feature>
<feature type="strand" evidence="7">
    <location>
        <begin position="124"/>
        <end position="126"/>
    </location>
</feature>
<feature type="turn" evidence="7">
    <location>
        <begin position="132"/>
        <end position="134"/>
    </location>
</feature>
<feature type="helix" evidence="7">
    <location>
        <begin position="136"/>
        <end position="138"/>
    </location>
</feature>
<feature type="strand" evidence="7">
    <location>
        <begin position="144"/>
        <end position="147"/>
    </location>
</feature>
<feature type="helix" evidence="7">
    <location>
        <begin position="151"/>
        <end position="167"/>
    </location>
</feature>
<feature type="strand" evidence="7">
    <location>
        <begin position="169"/>
        <end position="179"/>
    </location>
</feature>
<feature type="strand" evidence="7">
    <location>
        <begin position="186"/>
        <end position="188"/>
    </location>
</feature>
<feature type="turn" evidence="7">
    <location>
        <begin position="196"/>
        <end position="199"/>
    </location>
</feature>
<feature type="helix" evidence="7">
    <location>
        <begin position="202"/>
        <end position="204"/>
    </location>
</feature>
<feature type="strand" evidence="7">
    <location>
        <begin position="207"/>
        <end position="210"/>
    </location>
</feature>
<feature type="turn" evidence="7">
    <location>
        <begin position="213"/>
        <end position="216"/>
    </location>
</feature>
<feature type="helix" evidence="7">
    <location>
        <begin position="217"/>
        <end position="219"/>
    </location>
</feature>
<feature type="helix" evidence="7">
    <location>
        <begin position="222"/>
        <end position="224"/>
    </location>
</feature>
<feature type="strand" evidence="7">
    <location>
        <begin position="227"/>
        <end position="236"/>
    </location>
</feature>
<feature type="strand" evidence="7">
    <location>
        <begin position="241"/>
        <end position="253"/>
    </location>
</feature>
<feature type="helix" evidence="7">
    <location>
        <begin position="256"/>
        <end position="265"/>
    </location>
</feature>
<feature type="strand" evidence="7">
    <location>
        <begin position="269"/>
        <end position="274"/>
    </location>
</feature>
<feature type="helix" evidence="7">
    <location>
        <begin position="280"/>
        <end position="283"/>
    </location>
</feature>
<feature type="strand" evidence="7">
    <location>
        <begin position="289"/>
        <end position="293"/>
    </location>
</feature>
<feature type="helix" evidence="7">
    <location>
        <begin position="294"/>
        <end position="296"/>
    </location>
</feature>
<feature type="strand" evidence="7">
    <location>
        <begin position="298"/>
        <end position="302"/>
    </location>
</feature>
<feature type="strand" evidence="7">
    <location>
        <begin position="305"/>
        <end position="314"/>
    </location>
</feature>
<feature type="helix" evidence="7">
    <location>
        <begin position="318"/>
        <end position="334"/>
    </location>
</feature>
<proteinExistence type="evidence at protein level"/>
<accession>Q6GIL8</accession>
<dbReference type="EC" id="1.2.1.12" evidence="2"/>
<dbReference type="EMBL" id="BX571856">
    <property type="protein sequence ID" value="CAG39837.1"/>
    <property type="molecule type" value="Genomic_DNA"/>
</dbReference>
<dbReference type="RefSeq" id="WP_000279414.1">
    <property type="nucleotide sequence ID" value="NC_002952.2"/>
</dbReference>
<dbReference type="PDB" id="3HQ4">
    <property type="method" value="X-ray"/>
    <property type="resolution" value="2.20 A"/>
    <property type="chains" value="O/P/Q/R=1-336"/>
</dbReference>
<dbReference type="PDB" id="3K73">
    <property type="method" value="X-ray"/>
    <property type="resolution" value="2.50 A"/>
    <property type="chains" value="O/P/Q/R=1-336"/>
</dbReference>
<dbReference type="PDB" id="3K9Q">
    <property type="method" value="X-ray"/>
    <property type="resolution" value="2.50 A"/>
    <property type="chains" value="O/P/Q/R=1-336"/>
</dbReference>
<dbReference type="PDB" id="3KSD">
    <property type="method" value="X-ray"/>
    <property type="resolution" value="2.20 A"/>
    <property type="chains" value="O/P/Q/R=1-336"/>
</dbReference>
<dbReference type="PDB" id="3KSZ">
    <property type="method" value="X-ray"/>
    <property type="resolution" value="2.60 A"/>
    <property type="chains" value="O/P/Q/R=1-336"/>
</dbReference>
<dbReference type="PDB" id="3KV3">
    <property type="method" value="X-ray"/>
    <property type="resolution" value="2.50 A"/>
    <property type="chains" value="O/P/Q/R=1-336"/>
</dbReference>
<dbReference type="PDB" id="3L4S">
    <property type="method" value="X-ray"/>
    <property type="resolution" value="2.20 A"/>
    <property type="chains" value="O/P/Q/R=1-336"/>
</dbReference>
<dbReference type="PDB" id="3L6O">
    <property type="method" value="X-ray"/>
    <property type="resolution" value="2.20 A"/>
    <property type="chains" value="O/P/Q/R=1-336"/>
</dbReference>
<dbReference type="PDB" id="3LC1">
    <property type="method" value="X-ray"/>
    <property type="resolution" value="2.00 A"/>
    <property type="chains" value="O/P/Q/R=1-336"/>
</dbReference>
<dbReference type="PDB" id="3LC2">
    <property type="method" value="X-ray"/>
    <property type="resolution" value="2.80 A"/>
    <property type="chains" value="O/P/Q/R=1-336"/>
</dbReference>
<dbReference type="PDB" id="3LC7">
    <property type="method" value="X-ray"/>
    <property type="resolution" value="2.50 A"/>
    <property type="chains" value="O/P/Q/R=1-336"/>
</dbReference>
<dbReference type="PDB" id="3LVF">
    <property type="method" value="X-ray"/>
    <property type="resolution" value="1.70 A"/>
    <property type="chains" value="O/P/Q/R=1-336"/>
</dbReference>
<dbReference type="PDB" id="3VAZ">
    <property type="method" value="X-ray"/>
    <property type="resolution" value="3.19 A"/>
    <property type="chains" value="A/B/O/P/Q/R=1-336"/>
</dbReference>
<dbReference type="PDB" id="5T73">
    <property type="method" value="X-ray"/>
    <property type="resolution" value="2.60 A"/>
    <property type="chains" value="A/B/C/D=1-336"/>
</dbReference>
<dbReference type="PDBsum" id="3HQ4"/>
<dbReference type="PDBsum" id="3K73"/>
<dbReference type="PDBsum" id="3K9Q"/>
<dbReference type="PDBsum" id="3KSD"/>
<dbReference type="PDBsum" id="3KSZ"/>
<dbReference type="PDBsum" id="3KV3"/>
<dbReference type="PDBsum" id="3L4S"/>
<dbReference type="PDBsum" id="3L6O"/>
<dbReference type="PDBsum" id="3LC1"/>
<dbReference type="PDBsum" id="3LC2"/>
<dbReference type="PDBsum" id="3LC7"/>
<dbReference type="PDBsum" id="3LVF"/>
<dbReference type="PDBsum" id="3VAZ"/>
<dbReference type="PDBsum" id="5T73"/>
<dbReference type="SMR" id="Q6GIL8"/>
<dbReference type="MoonProt" id="Q6GIL8"/>
<dbReference type="KEGG" id="sar:SAR0828"/>
<dbReference type="HOGENOM" id="CLU_030140_0_0_9"/>
<dbReference type="BRENDA" id="1.2.1.12">
    <property type="organism ID" value="3352"/>
</dbReference>
<dbReference type="UniPathway" id="UPA00109">
    <property type="reaction ID" value="UER00184"/>
</dbReference>
<dbReference type="EvolutionaryTrace" id="Q6GIL8"/>
<dbReference type="Proteomes" id="UP000000596">
    <property type="component" value="Chromosome"/>
</dbReference>
<dbReference type="GO" id="GO:0005737">
    <property type="term" value="C:cytoplasm"/>
    <property type="evidence" value="ECO:0007669"/>
    <property type="project" value="UniProtKB-SubCell"/>
</dbReference>
<dbReference type="GO" id="GO:0004365">
    <property type="term" value="F:glyceraldehyde-3-phosphate dehydrogenase (NAD+) (phosphorylating) activity"/>
    <property type="evidence" value="ECO:0000314"/>
    <property type="project" value="UniProtKB"/>
</dbReference>
<dbReference type="GO" id="GO:0051287">
    <property type="term" value="F:NAD binding"/>
    <property type="evidence" value="ECO:0000314"/>
    <property type="project" value="UniProtKB"/>
</dbReference>
<dbReference type="GO" id="GO:0050661">
    <property type="term" value="F:NADP binding"/>
    <property type="evidence" value="ECO:0007669"/>
    <property type="project" value="InterPro"/>
</dbReference>
<dbReference type="GO" id="GO:0006006">
    <property type="term" value="P:glucose metabolic process"/>
    <property type="evidence" value="ECO:0007669"/>
    <property type="project" value="InterPro"/>
</dbReference>
<dbReference type="GO" id="GO:0006096">
    <property type="term" value="P:glycolytic process"/>
    <property type="evidence" value="ECO:0007669"/>
    <property type="project" value="UniProtKB-UniPathway"/>
</dbReference>
<dbReference type="CDD" id="cd18126">
    <property type="entry name" value="GAPDH_I_C"/>
    <property type="match status" value="1"/>
</dbReference>
<dbReference type="CDD" id="cd05214">
    <property type="entry name" value="GAPDH_I_N"/>
    <property type="match status" value="1"/>
</dbReference>
<dbReference type="FunFam" id="3.30.360.10:FF:000002">
    <property type="entry name" value="Glyceraldehyde-3-phosphate dehydrogenase"/>
    <property type="match status" value="1"/>
</dbReference>
<dbReference type="FunFam" id="3.40.50.720:FF:000001">
    <property type="entry name" value="Glyceraldehyde-3-phosphate dehydrogenase"/>
    <property type="match status" value="1"/>
</dbReference>
<dbReference type="Gene3D" id="3.30.360.10">
    <property type="entry name" value="Dihydrodipicolinate Reductase, domain 2"/>
    <property type="match status" value="1"/>
</dbReference>
<dbReference type="Gene3D" id="3.40.50.720">
    <property type="entry name" value="NAD(P)-binding Rossmann-like Domain"/>
    <property type="match status" value="1"/>
</dbReference>
<dbReference type="InterPro" id="IPR020831">
    <property type="entry name" value="GlycerAld/Erythrose_P_DH"/>
</dbReference>
<dbReference type="InterPro" id="IPR020830">
    <property type="entry name" value="GlycerAld_3-P_DH_AS"/>
</dbReference>
<dbReference type="InterPro" id="IPR020829">
    <property type="entry name" value="GlycerAld_3-P_DH_cat"/>
</dbReference>
<dbReference type="InterPro" id="IPR020828">
    <property type="entry name" value="GlycerAld_3-P_DH_NAD(P)-bd"/>
</dbReference>
<dbReference type="InterPro" id="IPR006424">
    <property type="entry name" value="Glyceraldehyde-3-P_DH_1"/>
</dbReference>
<dbReference type="InterPro" id="IPR036291">
    <property type="entry name" value="NAD(P)-bd_dom_sf"/>
</dbReference>
<dbReference type="NCBIfam" id="TIGR01534">
    <property type="entry name" value="GAPDH-I"/>
    <property type="match status" value="1"/>
</dbReference>
<dbReference type="PANTHER" id="PTHR43148">
    <property type="entry name" value="GLYCERALDEHYDE-3-PHOSPHATE DEHYDROGENASE 2"/>
    <property type="match status" value="1"/>
</dbReference>
<dbReference type="Pfam" id="PF02800">
    <property type="entry name" value="Gp_dh_C"/>
    <property type="match status" value="1"/>
</dbReference>
<dbReference type="Pfam" id="PF00044">
    <property type="entry name" value="Gp_dh_N"/>
    <property type="match status" value="1"/>
</dbReference>
<dbReference type="PIRSF" id="PIRSF000149">
    <property type="entry name" value="GAP_DH"/>
    <property type="match status" value="1"/>
</dbReference>
<dbReference type="PRINTS" id="PR00078">
    <property type="entry name" value="G3PDHDRGNASE"/>
</dbReference>
<dbReference type="SMART" id="SM00846">
    <property type="entry name" value="Gp_dh_N"/>
    <property type="match status" value="1"/>
</dbReference>
<dbReference type="SUPFAM" id="SSF55347">
    <property type="entry name" value="Glyceraldehyde-3-phosphate dehydrogenase-like, C-terminal domain"/>
    <property type="match status" value="1"/>
</dbReference>
<dbReference type="SUPFAM" id="SSF51735">
    <property type="entry name" value="NAD(P)-binding Rossmann-fold domains"/>
    <property type="match status" value="1"/>
</dbReference>
<dbReference type="PROSITE" id="PS00071">
    <property type="entry name" value="GAPDH"/>
    <property type="match status" value="1"/>
</dbReference>
<organism>
    <name type="scientific">Staphylococcus aureus (strain MRSA252)</name>
    <dbReference type="NCBI Taxonomy" id="282458"/>
    <lineage>
        <taxon>Bacteria</taxon>
        <taxon>Bacillati</taxon>
        <taxon>Bacillota</taxon>
        <taxon>Bacilli</taxon>
        <taxon>Bacillales</taxon>
        <taxon>Staphylococcaceae</taxon>
        <taxon>Staphylococcus</taxon>
    </lineage>
</organism>
<evidence type="ECO:0000250" key="1">
    <source>
        <dbReference type="UniProtKB" id="P00362"/>
    </source>
</evidence>
<evidence type="ECO:0000269" key="2">
    <source>
    </source>
</evidence>
<evidence type="ECO:0000269" key="3">
    <source ref="3"/>
</evidence>
<evidence type="ECO:0000303" key="4">
    <source>
    </source>
</evidence>
<evidence type="ECO:0000305" key="5"/>
<evidence type="ECO:0000305" key="6">
    <source>
    </source>
</evidence>
<evidence type="ECO:0007829" key="7">
    <source>
        <dbReference type="PDB" id="3LVF"/>
    </source>
</evidence>
<gene>
    <name type="primary">gapA1</name>
    <name type="synonym">gap</name>
    <name type="synonym">gapA</name>
    <name type="ordered locus">SAR0828</name>
</gene>
<reference key="1">
    <citation type="journal article" date="2004" name="Proc. Natl. Acad. Sci. U.S.A.">
        <title>Complete genomes of two clinical Staphylococcus aureus strains: evidence for the rapid evolution of virulence and drug resistance.</title>
        <authorList>
            <person name="Holden M.T.G."/>
            <person name="Feil E.J."/>
            <person name="Lindsay J.A."/>
            <person name="Peacock S.J."/>
            <person name="Day N.P.J."/>
            <person name="Enright M.C."/>
            <person name="Foster T.J."/>
            <person name="Moore C.E."/>
            <person name="Hurst L."/>
            <person name="Atkin R."/>
            <person name="Barron A."/>
            <person name="Bason N."/>
            <person name="Bentley S.D."/>
            <person name="Chillingworth C."/>
            <person name="Chillingworth T."/>
            <person name="Churcher C."/>
            <person name="Clark L."/>
            <person name="Corton C."/>
            <person name="Cronin A."/>
            <person name="Doggett J."/>
            <person name="Dowd L."/>
            <person name="Feltwell T."/>
            <person name="Hance Z."/>
            <person name="Harris B."/>
            <person name="Hauser H."/>
            <person name="Holroyd S."/>
            <person name="Jagels K."/>
            <person name="James K.D."/>
            <person name="Lennard N."/>
            <person name="Line A."/>
            <person name="Mayes R."/>
            <person name="Moule S."/>
            <person name="Mungall K."/>
            <person name="Ormond D."/>
            <person name="Quail M.A."/>
            <person name="Rabbinowitsch E."/>
            <person name="Rutherford K.M."/>
            <person name="Sanders M."/>
            <person name="Sharp S."/>
            <person name="Simmonds M."/>
            <person name="Stevens K."/>
            <person name="Whitehead S."/>
            <person name="Barrell B.G."/>
            <person name="Spratt B.G."/>
            <person name="Parkhill J."/>
        </authorList>
    </citation>
    <scope>NUCLEOTIDE SEQUENCE [LARGE SCALE GENOMIC DNA]</scope>
    <source>
        <strain>MRSA252</strain>
    </source>
</reference>
<reference key="2">
    <citation type="journal article" date="2010" name="J. Mol. Biol.">
        <title>Crystal structure of glyceraldehyde-3-phosphate dehydrogenase 1 from methicillin-resistant Staphylococcus aureus MRSA252 provides novel insights into substrate binding and catalytic mechanism.</title>
        <authorList>
            <person name="Mukherjee S."/>
            <person name="Dutta D."/>
            <person name="Saha B."/>
            <person name="Das A.K."/>
        </authorList>
    </citation>
    <scope>X-RAY CRYSTALLOGRAPHY (1.70 ANGSTROMS) OF MUTANT SER-151 IN COMPLEX WITH GLYCERALDEHYDE-3-PHOSPHATE AND NAD</scope>
    <scope>FUNCTION</scope>
    <scope>CATALYTIC ACTIVITY</scope>
    <scope>BIOPHYSICOCHEMICAL PROPERTIES</scope>
    <scope>MUTAGENESIS OF CYS-151 AND HIS-178</scope>
    <scope>ACTIVE SITE</scope>
    <scope>SUBUNIT</scope>
    <source>
        <strain>MRSA252</strain>
    </source>
</reference>
<reference key="3">
    <citation type="submission" date="2011-12" db="PDB data bank">
        <title>Crystal structure of Staphylococcal GAPDH1 in a hexagonal space group.</title>
        <authorList>
            <person name="Roychowdhury A."/>
            <person name="Mukherjee S."/>
            <person name="Dutta D."/>
            <person name="Das A.K."/>
        </authorList>
    </citation>
    <scope>X-RAY CRYSTALLOGRAPHY (3.19 ANGSTROMS) IN COMPLEX WITH NAD</scope>
    <scope>SUBUNIT</scope>
    <source>
        <strain>MRSA252</strain>
    </source>
</reference>
<protein>
    <recommendedName>
        <fullName evidence="4">Glyceraldehyde-3-phosphate dehydrogenase 1</fullName>
        <shortName evidence="4">GAPDH 1</shortName>
        <ecNumber evidence="2">1.2.1.12</ecNumber>
    </recommendedName>
    <alternativeName>
        <fullName evidence="4">NAD-dependent glyceraldehyde-3-phosphate dehydrogenase</fullName>
    </alternativeName>
</protein>
<sequence length="336" mass="36281">MAVKVAINGFGRIGRLAFRRIQEVEGLEVVAVNDLTDDDMLAHLLKYDTMQGRFTGEVEVVDGGFRVNGKEVKSFSEPDASKLPWKDLNIDVVLECTGFYTDKDKAQAHIEAGAKKVLISAPATGDLKTIVFNTNHQELDGSETVVSGASCTTNSLAPVAKVLNDDFGLVEGLMTTIHAYTGDQNTQDAPHRKGDKRRARAAAENIIPNSTGAAKAIGKVIPEIDGKLDGGAQRVPVATGSLTELTVVLEKQDVTVEQVNEAMKNASNESFGYTEDEIVSSDVVGMTYGSLFDATQTRVMSVGDRQLVKVAAWYDNEMSYTAQLVRTLAYLAELSK</sequence>